<name>GPDA_BACSU</name>
<proteinExistence type="evidence at protein level"/>
<keyword id="KW-0963">Cytoplasm</keyword>
<keyword id="KW-0444">Lipid biosynthesis</keyword>
<keyword id="KW-0443">Lipid metabolism</keyword>
<keyword id="KW-0520">NAD</keyword>
<keyword id="KW-0521">NADP</keyword>
<keyword id="KW-0560">Oxidoreductase</keyword>
<keyword id="KW-0594">Phospholipid biosynthesis</keyword>
<keyword id="KW-1208">Phospholipid metabolism</keyword>
<keyword id="KW-1185">Reference proteome</keyword>
<comment type="function">
    <text evidence="4">Catalyzes the reduction of the glycolytic intermediate dihydroxyacetone phosphate (DHAP) to sn-glycerol 3-phosphate (G3P), the key precursor for phospholipid synthesis.</text>
</comment>
<comment type="catalytic activity">
    <reaction evidence="2">
        <text>sn-glycerol 3-phosphate + NAD(+) = dihydroxyacetone phosphate + NADH + H(+)</text>
        <dbReference type="Rhea" id="RHEA:11092"/>
        <dbReference type="ChEBI" id="CHEBI:15378"/>
        <dbReference type="ChEBI" id="CHEBI:57540"/>
        <dbReference type="ChEBI" id="CHEBI:57597"/>
        <dbReference type="ChEBI" id="CHEBI:57642"/>
        <dbReference type="ChEBI" id="CHEBI:57945"/>
        <dbReference type="EC" id="1.1.1.94"/>
    </reaction>
    <physiologicalReaction direction="right-to-left" evidence="2">
        <dbReference type="Rhea" id="RHEA:11094"/>
    </physiologicalReaction>
</comment>
<comment type="catalytic activity">
    <reaction evidence="2 7">
        <text>sn-glycerol 3-phosphate + NADP(+) = dihydroxyacetone phosphate + NADPH + H(+)</text>
        <dbReference type="Rhea" id="RHEA:11096"/>
        <dbReference type="ChEBI" id="CHEBI:15378"/>
        <dbReference type="ChEBI" id="CHEBI:57597"/>
        <dbReference type="ChEBI" id="CHEBI:57642"/>
        <dbReference type="ChEBI" id="CHEBI:57783"/>
        <dbReference type="ChEBI" id="CHEBI:58349"/>
        <dbReference type="EC" id="1.1.1.94"/>
    </reaction>
    <physiologicalReaction direction="right-to-left" evidence="7">
        <dbReference type="Rhea" id="RHEA:11098"/>
    </physiologicalReaction>
</comment>
<comment type="activity regulation">
    <text evidence="4">Does not seem to be inhibited by sn-glycerol 3-phosphate, in contrast to the E.coli homolog enzyme which is very sensitive to allosteric inhibition by G3P.</text>
</comment>
<comment type="pathway">
    <text evidence="2 7">Membrane lipid metabolism; glycerophospholipid metabolism.</text>
</comment>
<comment type="subcellular location">
    <subcellularLocation>
        <location evidence="2 3">Cytoplasm</location>
    </subcellularLocation>
</comment>
<comment type="induction">
    <text evidence="4">Appears to be expressed at very low levels, which could be the way used by B.subtilis to regulate sn-glycerol 3-phosphate synthesis.</text>
</comment>
<comment type="disruption phenotype">
    <text evidence="4">Cells lacking this gene are auxotrophic for glycerol.</text>
</comment>
<comment type="similarity">
    <text evidence="2">Belongs to the NAD-dependent glycerol-3-phosphate dehydrogenase family.</text>
</comment>
<gene>
    <name evidence="2 5" type="primary">gpsA</name>
    <name type="synonym">glyC</name>
    <name type="ordered locus">BSU22830</name>
</gene>
<sequence length="345" mass="37436">MKKVTMLGAGSWGTALALVLTDNGNEVCVWAHRADLIHQINELHENKDYLPNVKLSTSIKGTTDMKEAVSDADVIIVAVPTKAIREVLRQAVPFITKKAVFVHVSKGIEPDSLLRISEIMEIELPSDVRKDIVVLSGPSHAEEVGLRHPTTVTASSKSMRAAEEVQDLFINHNFRVYTNPDIIGVEIGGALKNIIALAAGITDGLGYGDNAKAALITRGLAEIARLGTKMGGNPLTFSGLTGVGDLIVTCTSVHSRNWRAGNLLGKGYKLEDVLEEMGMVVEGVRTTKAAYQLSKKYDVKMPITEALHQVLFNGQKVETAVESLMARGKTHEMEDLVNTFENQVK</sequence>
<feature type="chain" id="PRO_0000137926" description="Glycerol-3-phosphate dehydrogenase [NAD(P)+]">
    <location>
        <begin position="1"/>
        <end position="345"/>
    </location>
</feature>
<feature type="active site" description="Proton acceptor" evidence="2">
    <location>
        <position position="192"/>
    </location>
</feature>
<feature type="binding site" evidence="1">
    <location>
        <position position="11"/>
    </location>
    <ligand>
        <name>NADPH</name>
        <dbReference type="ChEBI" id="CHEBI:57783"/>
    </ligand>
</feature>
<feature type="binding site" evidence="1">
    <location>
        <position position="12"/>
    </location>
    <ligand>
        <name>NADPH</name>
        <dbReference type="ChEBI" id="CHEBI:57783"/>
    </ligand>
</feature>
<feature type="binding site" evidence="1">
    <location>
        <position position="32"/>
    </location>
    <ligand>
        <name>NADPH</name>
        <dbReference type="ChEBI" id="CHEBI:57783"/>
    </ligand>
</feature>
<feature type="binding site" evidence="1">
    <location>
        <position position="33"/>
    </location>
    <ligand>
        <name>NADPH</name>
        <dbReference type="ChEBI" id="CHEBI:57783"/>
    </ligand>
</feature>
<feature type="binding site" evidence="1">
    <location>
        <position position="106"/>
    </location>
    <ligand>
        <name>NADPH</name>
        <dbReference type="ChEBI" id="CHEBI:57783"/>
    </ligand>
</feature>
<feature type="binding site" evidence="1">
    <location>
        <position position="106"/>
    </location>
    <ligand>
        <name>sn-glycerol 3-phosphate</name>
        <dbReference type="ChEBI" id="CHEBI:57597"/>
    </ligand>
</feature>
<feature type="binding site" evidence="1">
    <location>
        <position position="137"/>
    </location>
    <ligand>
        <name>sn-glycerol 3-phosphate</name>
        <dbReference type="ChEBI" id="CHEBI:57597"/>
    </ligand>
</feature>
<feature type="binding site" evidence="1">
    <location>
        <position position="139"/>
    </location>
    <ligand>
        <name>sn-glycerol 3-phosphate</name>
        <dbReference type="ChEBI" id="CHEBI:57597"/>
    </ligand>
</feature>
<feature type="binding site" evidence="1">
    <location>
        <position position="141"/>
    </location>
    <ligand>
        <name>NADPH</name>
        <dbReference type="ChEBI" id="CHEBI:57783"/>
    </ligand>
</feature>
<feature type="binding site" evidence="1">
    <location>
        <position position="192"/>
    </location>
    <ligand>
        <name>sn-glycerol 3-phosphate</name>
        <dbReference type="ChEBI" id="CHEBI:57597"/>
    </ligand>
</feature>
<feature type="binding site" evidence="1">
    <location>
        <position position="245"/>
    </location>
    <ligand>
        <name>sn-glycerol 3-phosphate</name>
        <dbReference type="ChEBI" id="CHEBI:57597"/>
    </ligand>
</feature>
<feature type="binding site" evidence="1">
    <location>
        <position position="255"/>
    </location>
    <ligand>
        <name>sn-glycerol 3-phosphate</name>
        <dbReference type="ChEBI" id="CHEBI:57597"/>
    </ligand>
</feature>
<feature type="binding site" evidence="1">
    <location>
        <position position="256"/>
    </location>
    <ligand>
        <name>NADPH</name>
        <dbReference type="ChEBI" id="CHEBI:57783"/>
    </ligand>
</feature>
<feature type="binding site" evidence="1">
    <location>
        <position position="256"/>
    </location>
    <ligand>
        <name>sn-glycerol 3-phosphate</name>
        <dbReference type="ChEBI" id="CHEBI:57597"/>
    </ligand>
</feature>
<feature type="binding site" evidence="1">
    <location>
        <position position="257"/>
    </location>
    <ligand>
        <name>sn-glycerol 3-phosphate</name>
        <dbReference type="ChEBI" id="CHEBI:57597"/>
    </ligand>
</feature>
<feature type="binding site" evidence="1">
    <location>
        <position position="280"/>
    </location>
    <ligand>
        <name>NADPH</name>
        <dbReference type="ChEBI" id="CHEBI:57783"/>
    </ligand>
</feature>
<feature type="binding site" evidence="1">
    <location>
        <position position="282"/>
    </location>
    <ligand>
        <name>NADPH</name>
        <dbReference type="ChEBI" id="CHEBI:57783"/>
    </ligand>
</feature>
<feature type="sequence conflict" description="In Ref. 1; AAA86746." evidence="6" ref="1">
    <original>K</original>
    <variation>R</variation>
    <location>
        <position position="130"/>
    </location>
</feature>
<feature type="sequence conflict" description="In Ref. 1; AAA86746." evidence="6" ref="1">
    <original>P</original>
    <variation>A</variation>
    <location>
        <position position="149"/>
    </location>
</feature>
<accession>P46919</accession>
<protein>
    <recommendedName>
        <fullName evidence="2 7">Glycerol-3-phosphate dehydrogenase [NAD(P)+]</fullName>
        <ecNumber evidence="2 7">1.1.1.94</ecNumber>
    </recommendedName>
    <alternativeName>
        <fullName evidence="2">NAD(P)(+)-dependent glycerol-3-phosphate dehydrogenase</fullName>
    </alternativeName>
    <alternativeName>
        <fullName evidence="5">NAD(P)H-dependent dihydroxyacetone-phosphate reductase</fullName>
    </alternativeName>
</protein>
<evidence type="ECO:0000250" key="1">
    <source>
        <dbReference type="UniProtKB" id="A0A0F6AK91"/>
    </source>
</evidence>
<evidence type="ECO:0000255" key="2">
    <source>
        <dbReference type="HAMAP-Rule" id="MF_00394"/>
    </source>
</evidence>
<evidence type="ECO:0000269" key="3">
    <source>
    </source>
</evidence>
<evidence type="ECO:0000269" key="4">
    <source>
    </source>
</evidence>
<evidence type="ECO:0000303" key="5">
    <source>
    </source>
</evidence>
<evidence type="ECO:0000305" key="6"/>
<evidence type="ECO:0000305" key="7">
    <source>
    </source>
</evidence>
<dbReference type="EC" id="1.1.1.94" evidence="2 7"/>
<dbReference type="EMBL" id="U32164">
    <property type="protein sequence ID" value="AAA86746.1"/>
    <property type="molecule type" value="Genomic_DNA"/>
</dbReference>
<dbReference type="EMBL" id="L47648">
    <property type="protein sequence ID" value="AAC83967.1"/>
    <property type="molecule type" value="Genomic_DNA"/>
</dbReference>
<dbReference type="EMBL" id="AL009126">
    <property type="protein sequence ID" value="CAB14199.1"/>
    <property type="molecule type" value="Genomic_DNA"/>
</dbReference>
<dbReference type="PIR" id="H69636">
    <property type="entry name" value="H69636"/>
</dbReference>
<dbReference type="RefSeq" id="NP_390164.1">
    <property type="nucleotide sequence ID" value="NC_000964.3"/>
</dbReference>
<dbReference type="RefSeq" id="WP_003230566.1">
    <property type="nucleotide sequence ID" value="NZ_OZ025638.1"/>
</dbReference>
<dbReference type="SMR" id="P46919"/>
<dbReference type="FunCoup" id="P46919">
    <property type="interactions" value="571"/>
</dbReference>
<dbReference type="STRING" id="224308.BSU22830"/>
<dbReference type="jPOST" id="P46919"/>
<dbReference type="PaxDb" id="224308-BSU22830"/>
<dbReference type="EnsemblBacteria" id="CAB14199">
    <property type="protein sequence ID" value="CAB14199"/>
    <property type="gene ID" value="BSU_22830"/>
</dbReference>
<dbReference type="GeneID" id="938989"/>
<dbReference type="KEGG" id="bsu:BSU22830"/>
<dbReference type="PATRIC" id="fig|224308.179.peg.2488"/>
<dbReference type="eggNOG" id="COG0240">
    <property type="taxonomic scope" value="Bacteria"/>
</dbReference>
<dbReference type="InParanoid" id="P46919"/>
<dbReference type="OrthoDB" id="9812273at2"/>
<dbReference type="PhylomeDB" id="P46919"/>
<dbReference type="BioCyc" id="BSUB:BSU22830-MONOMER"/>
<dbReference type="UniPathway" id="UPA00940"/>
<dbReference type="Proteomes" id="UP000001570">
    <property type="component" value="Chromosome"/>
</dbReference>
<dbReference type="GO" id="GO:0005829">
    <property type="term" value="C:cytosol"/>
    <property type="evidence" value="ECO:0000318"/>
    <property type="project" value="GO_Central"/>
</dbReference>
<dbReference type="GO" id="GO:0047952">
    <property type="term" value="F:glycerol-3-phosphate dehydrogenase [NAD(P)+] activity"/>
    <property type="evidence" value="ECO:0000314"/>
    <property type="project" value="UniProtKB"/>
</dbReference>
<dbReference type="GO" id="GO:0051287">
    <property type="term" value="F:NAD binding"/>
    <property type="evidence" value="ECO:0007669"/>
    <property type="project" value="InterPro"/>
</dbReference>
<dbReference type="GO" id="GO:0005975">
    <property type="term" value="P:carbohydrate metabolic process"/>
    <property type="evidence" value="ECO:0007669"/>
    <property type="project" value="InterPro"/>
</dbReference>
<dbReference type="GO" id="GO:0046167">
    <property type="term" value="P:glycerol-3-phosphate biosynthetic process"/>
    <property type="evidence" value="ECO:0007669"/>
    <property type="project" value="UniProtKB-UniRule"/>
</dbReference>
<dbReference type="GO" id="GO:0046168">
    <property type="term" value="P:glycerol-3-phosphate catabolic process"/>
    <property type="evidence" value="ECO:0007669"/>
    <property type="project" value="InterPro"/>
</dbReference>
<dbReference type="GO" id="GO:0006072">
    <property type="term" value="P:glycerol-3-phosphate metabolic process"/>
    <property type="evidence" value="ECO:0000318"/>
    <property type="project" value="GO_Central"/>
</dbReference>
<dbReference type="GO" id="GO:0006650">
    <property type="term" value="P:glycerophospholipid metabolic process"/>
    <property type="evidence" value="ECO:0007669"/>
    <property type="project" value="UniProtKB-UniRule"/>
</dbReference>
<dbReference type="GO" id="GO:0008654">
    <property type="term" value="P:phospholipid biosynthetic process"/>
    <property type="evidence" value="ECO:0007669"/>
    <property type="project" value="UniProtKB-KW"/>
</dbReference>
<dbReference type="FunFam" id="1.10.1040.10:FF:000001">
    <property type="entry name" value="Glycerol-3-phosphate dehydrogenase [NAD(P)+]"/>
    <property type="match status" value="1"/>
</dbReference>
<dbReference type="FunFam" id="3.40.50.720:FF:000019">
    <property type="entry name" value="Glycerol-3-phosphate dehydrogenase [NAD(P)+]"/>
    <property type="match status" value="1"/>
</dbReference>
<dbReference type="Gene3D" id="1.10.1040.10">
    <property type="entry name" value="N-(1-d-carboxylethyl)-l-norvaline Dehydrogenase, domain 2"/>
    <property type="match status" value="1"/>
</dbReference>
<dbReference type="Gene3D" id="3.40.50.720">
    <property type="entry name" value="NAD(P)-binding Rossmann-like Domain"/>
    <property type="match status" value="1"/>
</dbReference>
<dbReference type="HAMAP" id="MF_00394">
    <property type="entry name" value="NAD_Glyc3P_dehydrog"/>
    <property type="match status" value="1"/>
</dbReference>
<dbReference type="InterPro" id="IPR008927">
    <property type="entry name" value="6-PGluconate_DH-like_C_sf"/>
</dbReference>
<dbReference type="InterPro" id="IPR013328">
    <property type="entry name" value="6PGD_dom2"/>
</dbReference>
<dbReference type="InterPro" id="IPR006168">
    <property type="entry name" value="G3P_DH_NAD-dep"/>
</dbReference>
<dbReference type="InterPro" id="IPR006109">
    <property type="entry name" value="G3P_DH_NAD-dep_C"/>
</dbReference>
<dbReference type="InterPro" id="IPR011128">
    <property type="entry name" value="G3P_DH_NAD-dep_N"/>
</dbReference>
<dbReference type="InterPro" id="IPR036291">
    <property type="entry name" value="NAD(P)-bd_dom_sf"/>
</dbReference>
<dbReference type="NCBIfam" id="NF000940">
    <property type="entry name" value="PRK00094.1-2"/>
    <property type="match status" value="1"/>
</dbReference>
<dbReference type="NCBIfam" id="NF000941">
    <property type="entry name" value="PRK00094.1-3"/>
    <property type="match status" value="1"/>
</dbReference>
<dbReference type="NCBIfam" id="NF000942">
    <property type="entry name" value="PRK00094.1-4"/>
    <property type="match status" value="1"/>
</dbReference>
<dbReference type="PANTHER" id="PTHR11728">
    <property type="entry name" value="GLYCEROL-3-PHOSPHATE DEHYDROGENASE"/>
    <property type="match status" value="1"/>
</dbReference>
<dbReference type="PANTHER" id="PTHR11728:SF1">
    <property type="entry name" value="GLYCEROL-3-PHOSPHATE DEHYDROGENASE [NAD(+)] 2, CHLOROPLASTIC"/>
    <property type="match status" value="1"/>
</dbReference>
<dbReference type="Pfam" id="PF07479">
    <property type="entry name" value="NAD_Gly3P_dh_C"/>
    <property type="match status" value="1"/>
</dbReference>
<dbReference type="Pfam" id="PF01210">
    <property type="entry name" value="NAD_Gly3P_dh_N"/>
    <property type="match status" value="1"/>
</dbReference>
<dbReference type="PIRSF" id="PIRSF000114">
    <property type="entry name" value="Glycerol-3-P_dh"/>
    <property type="match status" value="1"/>
</dbReference>
<dbReference type="PRINTS" id="PR00077">
    <property type="entry name" value="GPDHDRGNASE"/>
</dbReference>
<dbReference type="SUPFAM" id="SSF48179">
    <property type="entry name" value="6-phosphogluconate dehydrogenase C-terminal domain-like"/>
    <property type="match status" value="1"/>
</dbReference>
<dbReference type="SUPFAM" id="SSF51735">
    <property type="entry name" value="NAD(P)-binding Rossmann-fold domains"/>
    <property type="match status" value="1"/>
</dbReference>
<dbReference type="PROSITE" id="PS00957">
    <property type="entry name" value="NAD_G3PDH"/>
    <property type="match status" value="1"/>
</dbReference>
<reference key="1">
    <citation type="journal article" date="1995" name="J. Bacteriol.">
        <title>Synthesis of sn-glycerol 3-phosphate, a key precursor of membrane lipids, in Bacillus subtilis.</title>
        <authorList>
            <person name="Morbidoni H.R."/>
            <person name="de Mendoza D."/>
            <person name="Cronan J.E. Jr."/>
        </authorList>
    </citation>
    <scope>NUCLEOTIDE SEQUENCE [GENOMIC DNA]</scope>
    <scope>FUNCTION</scope>
    <scope>CATALYTIC ACTIVITY</scope>
    <scope>ACTIVITY REGULATION</scope>
    <scope>DISRUPTION PHENOTYPE</scope>
    <scope>INDUCTION</scope>
    <source>
        <strain>168</strain>
    </source>
</reference>
<reference key="2">
    <citation type="journal article" date="1996" name="Microbiology">
        <title>Sequence analysis of the Bacillus subtilis chromosome region between the serA and kdg loci cloned in a yeast artificial chromosome.</title>
        <authorList>
            <person name="Sorokin A.V."/>
            <person name="Azevedo V."/>
            <person name="Zumstein E."/>
            <person name="Galleron N."/>
            <person name="Ehrlich S.D."/>
            <person name="Serror P."/>
        </authorList>
    </citation>
    <scope>NUCLEOTIDE SEQUENCE [GENOMIC DNA]</scope>
    <source>
        <strain>168 / Marburg / ATCC 6051 / DSM 10 / JCM 1465 / NBRC 13719 / NCIMB 3610 / NRRL NRS-744 / VKM B-501</strain>
    </source>
</reference>
<reference key="3">
    <citation type="journal article" date="1997" name="Nature">
        <title>The complete genome sequence of the Gram-positive bacterium Bacillus subtilis.</title>
        <authorList>
            <person name="Kunst F."/>
            <person name="Ogasawara N."/>
            <person name="Moszer I."/>
            <person name="Albertini A.M."/>
            <person name="Alloni G."/>
            <person name="Azevedo V."/>
            <person name="Bertero M.G."/>
            <person name="Bessieres P."/>
            <person name="Bolotin A."/>
            <person name="Borchert S."/>
            <person name="Borriss R."/>
            <person name="Boursier L."/>
            <person name="Brans A."/>
            <person name="Braun M."/>
            <person name="Brignell S.C."/>
            <person name="Bron S."/>
            <person name="Brouillet S."/>
            <person name="Bruschi C.V."/>
            <person name="Caldwell B."/>
            <person name="Capuano V."/>
            <person name="Carter N.M."/>
            <person name="Choi S.-K."/>
            <person name="Codani J.-J."/>
            <person name="Connerton I.F."/>
            <person name="Cummings N.J."/>
            <person name="Daniel R.A."/>
            <person name="Denizot F."/>
            <person name="Devine K.M."/>
            <person name="Duesterhoeft A."/>
            <person name="Ehrlich S.D."/>
            <person name="Emmerson P.T."/>
            <person name="Entian K.-D."/>
            <person name="Errington J."/>
            <person name="Fabret C."/>
            <person name="Ferrari E."/>
            <person name="Foulger D."/>
            <person name="Fritz C."/>
            <person name="Fujita M."/>
            <person name="Fujita Y."/>
            <person name="Fuma S."/>
            <person name="Galizzi A."/>
            <person name="Galleron N."/>
            <person name="Ghim S.-Y."/>
            <person name="Glaser P."/>
            <person name="Goffeau A."/>
            <person name="Golightly E.J."/>
            <person name="Grandi G."/>
            <person name="Guiseppi G."/>
            <person name="Guy B.J."/>
            <person name="Haga K."/>
            <person name="Haiech J."/>
            <person name="Harwood C.R."/>
            <person name="Henaut A."/>
            <person name="Hilbert H."/>
            <person name="Holsappel S."/>
            <person name="Hosono S."/>
            <person name="Hullo M.-F."/>
            <person name="Itaya M."/>
            <person name="Jones L.-M."/>
            <person name="Joris B."/>
            <person name="Karamata D."/>
            <person name="Kasahara Y."/>
            <person name="Klaerr-Blanchard M."/>
            <person name="Klein C."/>
            <person name="Kobayashi Y."/>
            <person name="Koetter P."/>
            <person name="Koningstein G."/>
            <person name="Krogh S."/>
            <person name="Kumano M."/>
            <person name="Kurita K."/>
            <person name="Lapidus A."/>
            <person name="Lardinois S."/>
            <person name="Lauber J."/>
            <person name="Lazarevic V."/>
            <person name="Lee S.-M."/>
            <person name="Levine A."/>
            <person name="Liu H."/>
            <person name="Masuda S."/>
            <person name="Mauel C."/>
            <person name="Medigue C."/>
            <person name="Medina N."/>
            <person name="Mellado R.P."/>
            <person name="Mizuno M."/>
            <person name="Moestl D."/>
            <person name="Nakai S."/>
            <person name="Noback M."/>
            <person name="Noone D."/>
            <person name="O'Reilly M."/>
            <person name="Ogawa K."/>
            <person name="Ogiwara A."/>
            <person name="Oudega B."/>
            <person name="Park S.-H."/>
            <person name="Parro V."/>
            <person name="Pohl T.M."/>
            <person name="Portetelle D."/>
            <person name="Porwollik S."/>
            <person name="Prescott A.M."/>
            <person name="Presecan E."/>
            <person name="Pujic P."/>
            <person name="Purnelle B."/>
            <person name="Rapoport G."/>
            <person name="Rey M."/>
            <person name="Reynolds S."/>
            <person name="Rieger M."/>
            <person name="Rivolta C."/>
            <person name="Rocha E."/>
            <person name="Roche B."/>
            <person name="Rose M."/>
            <person name="Sadaie Y."/>
            <person name="Sato T."/>
            <person name="Scanlan E."/>
            <person name="Schleich S."/>
            <person name="Schroeter R."/>
            <person name="Scoffone F."/>
            <person name="Sekiguchi J."/>
            <person name="Sekowska A."/>
            <person name="Seror S.J."/>
            <person name="Serror P."/>
            <person name="Shin B.-S."/>
            <person name="Soldo B."/>
            <person name="Sorokin A."/>
            <person name="Tacconi E."/>
            <person name="Takagi T."/>
            <person name="Takahashi H."/>
            <person name="Takemaru K."/>
            <person name="Takeuchi M."/>
            <person name="Tamakoshi A."/>
            <person name="Tanaka T."/>
            <person name="Terpstra P."/>
            <person name="Tognoni A."/>
            <person name="Tosato V."/>
            <person name="Uchiyama S."/>
            <person name="Vandenbol M."/>
            <person name="Vannier F."/>
            <person name="Vassarotti A."/>
            <person name="Viari A."/>
            <person name="Wambutt R."/>
            <person name="Wedler E."/>
            <person name="Wedler H."/>
            <person name="Weitzenegger T."/>
            <person name="Winters P."/>
            <person name="Wipat A."/>
            <person name="Yamamoto H."/>
            <person name="Yamane K."/>
            <person name="Yasumoto K."/>
            <person name="Yata K."/>
            <person name="Yoshida K."/>
            <person name="Yoshikawa H.-F."/>
            <person name="Zumstein E."/>
            <person name="Yoshikawa H."/>
            <person name="Danchin A."/>
        </authorList>
    </citation>
    <scope>NUCLEOTIDE SEQUENCE [LARGE SCALE GENOMIC DNA]</scope>
    <source>
        <strain>168</strain>
    </source>
</reference>
<reference key="4">
    <citation type="journal article" date="2005" name="J. Bacteriol.">
        <title>Phosphatidylethanolamine domains and localization of phospholipid synthases in Bacillus subtilis membranes.</title>
        <authorList>
            <person name="Nishibori A."/>
            <person name="Kusaka J."/>
            <person name="Hara H."/>
            <person name="Umeda M."/>
            <person name="Matsumoto K."/>
        </authorList>
    </citation>
    <scope>SUBCELLULAR LOCATION</scope>
</reference>
<organism>
    <name type="scientific">Bacillus subtilis (strain 168)</name>
    <dbReference type="NCBI Taxonomy" id="224308"/>
    <lineage>
        <taxon>Bacteria</taxon>
        <taxon>Bacillati</taxon>
        <taxon>Bacillota</taxon>
        <taxon>Bacilli</taxon>
        <taxon>Bacillales</taxon>
        <taxon>Bacillaceae</taxon>
        <taxon>Bacillus</taxon>
    </lineage>
</organism>